<dbReference type="EMBL" id="CP000016">
    <property type="protein sequence ID" value="AAZ40857.1"/>
    <property type="molecule type" value="Genomic_DNA"/>
</dbReference>
<dbReference type="RefSeq" id="WP_011282764.1">
    <property type="nucleotide sequence ID" value="NC_007292.1"/>
</dbReference>
<dbReference type="SMR" id="Q493I3"/>
<dbReference type="STRING" id="291272.BPEN_224"/>
<dbReference type="KEGG" id="bpn:BPEN_224"/>
<dbReference type="eggNOG" id="COG0203">
    <property type="taxonomic scope" value="Bacteria"/>
</dbReference>
<dbReference type="HOGENOM" id="CLU_074407_2_0_6"/>
<dbReference type="OrthoDB" id="9809073at2"/>
<dbReference type="Proteomes" id="UP000007794">
    <property type="component" value="Chromosome"/>
</dbReference>
<dbReference type="GO" id="GO:0022625">
    <property type="term" value="C:cytosolic large ribosomal subunit"/>
    <property type="evidence" value="ECO:0007669"/>
    <property type="project" value="TreeGrafter"/>
</dbReference>
<dbReference type="GO" id="GO:0003735">
    <property type="term" value="F:structural constituent of ribosome"/>
    <property type="evidence" value="ECO:0007669"/>
    <property type="project" value="InterPro"/>
</dbReference>
<dbReference type="GO" id="GO:0006412">
    <property type="term" value="P:translation"/>
    <property type="evidence" value="ECO:0007669"/>
    <property type="project" value="UniProtKB-UniRule"/>
</dbReference>
<dbReference type="FunFam" id="3.90.1030.10:FF:000001">
    <property type="entry name" value="50S ribosomal protein L17"/>
    <property type="match status" value="1"/>
</dbReference>
<dbReference type="Gene3D" id="3.90.1030.10">
    <property type="entry name" value="Ribosomal protein L17"/>
    <property type="match status" value="1"/>
</dbReference>
<dbReference type="HAMAP" id="MF_01368">
    <property type="entry name" value="Ribosomal_bL17"/>
    <property type="match status" value="1"/>
</dbReference>
<dbReference type="InterPro" id="IPR000456">
    <property type="entry name" value="Ribosomal_bL17"/>
</dbReference>
<dbReference type="InterPro" id="IPR047859">
    <property type="entry name" value="Ribosomal_bL17_CS"/>
</dbReference>
<dbReference type="InterPro" id="IPR036373">
    <property type="entry name" value="Ribosomal_bL17_sf"/>
</dbReference>
<dbReference type="NCBIfam" id="TIGR00059">
    <property type="entry name" value="L17"/>
    <property type="match status" value="1"/>
</dbReference>
<dbReference type="PANTHER" id="PTHR14413:SF16">
    <property type="entry name" value="LARGE RIBOSOMAL SUBUNIT PROTEIN BL17M"/>
    <property type="match status" value="1"/>
</dbReference>
<dbReference type="PANTHER" id="PTHR14413">
    <property type="entry name" value="RIBOSOMAL PROTEIN L17"/>
    <property type="match status" value="1"/>
</dbReference>
<dbReference type="Pfam" id="PF01196">
    <property type="entry name" value="Ribosomal_L17"/>
    <property type="match status" value="1"/>
</dbReference>
<dbReference type="SUPFAM" id="SSF64263">
    <property type="entry name" value="Prokaryotic ribosomal protein L17"/>
    <property type="match status" value="1"/>
</dbReference>
<dbReference type="PROSITE" id="PS01167">
    <property type="entry name" value="RIBOSOMAL_L17"/>
    <property type="match status" value="1"/>
</dbReference>
<keyword id="KW-1185">Reference proteome</keyword>
<keyword id="KW-0687">Ribonucleoprotein</keyword>
<keyword id="KW-0689">Ribosomal protein</keyword>
<organism>
    <name type="scientific">Blochmanniella pennsylvanica (strain BPEN)</name>
    <dbReference type="NCBI Taxonomy" id="291272"/>
    <lineage>
        <taxon>Bacteria</taxon>
        <taxon>Pseudomonadati</taxon>
        <taxon>Pseudomonadota</taxon>
        <taxon>Gammaproteobacteria</taxon>
        <taxon>Enterobacterales</taxon>
        <taxon>Enterobacteriaceae</taxon>
        <taxon>ant endosymbionts</taxon>
        <taxon>Candidatus Blochmanniella</taxon>
    </lineage>
</organism>
<gene>
    <name evidence="1" type="primary">rplQ</name>
    <name type="ordered locus">BPEN_224</name>
</gene>
<protein>
    <recommendedName>
        <fullName evidence="1">Large ribosomal subunit protein bL17</fullName>
    </recommendedName>
    <alternativeName>
        <fullName evidence="2">50S ribosomal protein L17</fullName>
    </alternativeName>
</protein>
<accession>Q493I3</accession>
<name>RL17_BLOPB</name>
<reference key="1">
    <citation type="journal article" date="2005" name="Genome Res.">
        <title>Genome sequence of Blochmannia pennsylvanicus indicates parallel evolutionary trends among bacterial mutualists of insects.</title>
        <authorList>
            <person name="Degnan P.H."/>
            <person name="Lazarus A.B."/>
            <person name="Wernegreen J.J."/>
        </authorList>
    </citation>
    <scope>NUCLEOTIDE SEQUENCE [LARGE SCALE GENOMIC DNA]</scope>
    <source>
        <strain>BPEN</strain>
    </source>
</reference>
<feature type="chain" id="PRO_1000055776" description="Large ribosomal subunit protein bL17">
    <location>
        <begin position="1"/>
        <end position="125"/>
    </location>
</feature>
<proteinExistence type="inferred from homology"/>
<sequence>MRHRKSGSKLNRTSAHRKAMFKNMVVSLVMHKIIKTTLSKAKALRRIIEPLITRSKVDTIANRRLIFSKTRNNDVVTKLFTQISPYFYNRPGGYTRILKCGLRKGDNAPMAYIELVERSKIKQKI</sequence>
<comment type="subunit">
    <text evidence="1">Part of the 50S ribosomal subunit. Contacts protein L32.</text>
</comment>
<comment type="similarity">
    <text evidence="1">Belongs to the bacterial ribosomal protein bL17 family.</text>
</comment>
<evidence type="ECO:0000255" key="1">
    <source>
        <dbReference type="HAMAP-Rule" id="MF_01368"/>
    </source>
</evidence>
<evidence type="ECO:0000305" key="2"/>